<comment type="similarity">
    <text evidence="1">Belongs to the universal ribosomal protein uL29 family.</text>
</comment>
<organism>
    <name type="scientific">Coprothermobacter proteolyticus (strain ATCC 35245 / DSM 5265 / OCM 4 / BT)</name>
    <dbReference type="NCBI Taxonomy" id="309798"/>
    <lineage>
        <taxon>Bacteria</taxon>
        <taxon>Pseudomonadati</taxon>
        <taxon>Coprothermobacterota</taxon>
        <taxon>Coprothermobacteria</taxon>
        <taxon>Coprothermobacterales</taxon>
        <taxon>Coprothermobacteraceae</taxon>
        <taxon>Coprothermobacter</taxon>
    </lineage>
</organism>
<evidence type="ECO:0000255" key="1">
    <source>
        <dbReference type="HAMAP-Rule" id="MF_00374"/>
    </source>
</evidence>
<evidence type="ECO:0000305" key="2"/>
<name>RL29_COPPD</name>
<protein>
    <recommendedName>
        <fullName evidence="1">Large ribosomal subunit protein uL29</fullName>
    </recommendedName>
    <alternativeName>
        <fullName evidence="2">50S ribosomal protein L29</fullName>
    </alternativeName>
</protein>
<keyword id="KW-1185">Reference proteome</keyword>
<keyword id="KW-0687">Ribonucleoprotein</keyword>
<keyword id="KW-0689">Ribosomal protein</keyword>
<accession>B5Y980</accession>
<reference key="1">
    <citation type="submission" date="2008-08" db="EMBL/GenBank/DDBJ databases">
        <title>The complete genome sequence of Coprothermobacter proteolyticus strain ATCC 5245 / DSM 5265 / BT.</title>
        <authorList>
            <person name="Dodson R.J."/>
            <person name="Durkin A.S."/>
            <person name="Wu M."/>
            <person name="Eisen J."/>
            <person name="Sutton G."/>
        </authorList>
    </citation>
    <scope>NUCLEOTIDE SEQUENCE [LARGE SCALE GENOMIC DNA]</scope>
    <source>
        <strain>ATCC 35245 / DSM 5265 / OCM 4 / BT</strain>
    </source>
</reference>
<sequence length="64" mass="7346">MQGTELREKTTEELEALLKELRAKLVNLKFQLSVGKLTDHTAITKTKRDIARVLTVLRERGIKL</sequence>
<dbReference type="EMBL" id="CP001145">
    <property type="protein sequence ID" value="ACI17157.1"/>
    <property type="molecule type" value="Genomic_DNA"/>
</dbReference>
<dbReference type="RefSeq" id="WP_012543809.1">
    <property type="nucleotide sequence ID" value="NC_011295.1"/>
</dbReference>
<dbReference type="SMR" id="B5Y980"/>
<dbReference type="STRING" id="309798.COPRO5265_1005"/>
<dbReference type="KEGG" id="cpo:COPRO5265_1005"/>
<dbReference type="eggNOG" id="COG0255">
    <property type="taxonomic scope" value="Bacteria"/>
</dbReference>
<dbReference type="HOGENOM" id="CLU_158491_2_0_9"/>
<dbReference type="OrthoDB" id="9815192at2"/>
<dbReference type="Proteomes" id="UP000001732">
    <property type="component" value="Chromosome"/>
</dbReference>
<dbReference type="GO" id="GO:0022625">
    <property type="term" value="C:cytosolic large ribosomal subunit"/>
    <property type="evidence" value="ECO:0007669"/>
    <property type="project" value="TreeGrafter"/>
</dbReference>
<dbReference type="GO" id="GO:0003735">
    <property type="term" value="F:structural constituent of ribosome"/>
    <property type="evidence" value="ECO:0007669"/>
    <property type="project" value="InterPro"/>
</dbReference>
<dbReference type="GO" id="GO:0006412">
    <property type="term" value="P:translation"/>
    <property type="evidence" value="ECO:0007669"/>
    <property type="project" value="UniProtKB-UniRule"/>
</dbReference>
<dbReference type="CDD" id="cd00427">
    <property type="entry name" value="Ribosomal_L29_HIP"/>
    <property type="match status" value="1"/>
</dbReference>
<dbReference type="FunFam" id="1.10.287.310:FF:000001">
    <property type="entry name" value="50S ribosomal protein L29"/>
    <property type="match status" value="1"/>
</dbReference>
<dbReference type="Gene3D" id="1.10.287.310">
    <property type="match status" value="1"/>
</dbReference>
<dbReference type="HAMAP" id="MF_00374">
    <property type="entry name" value="Ribosomal_uL29"/>
    <property type="match status" value="1"/>
</dbReference>
<dbReference type="InterPro" id="IPR050063">
    <property type="entry name" value="Ribosomal_protein_uL29"/>
</dbReference>
<dbReference type="InterPro" id="IPR001854">
    <property type="entry name" value="Ribosomal_uL29"/>
</dbReference>
<dbReference type="InterPro" id="IPR036049">
    <property type="entry name" value="Ribosomal_uL29_sf"/>
</dbReference>
<dbReference type="NCBIfam" id="TIGR00012">
    <property type="entry name" value="L29"/>
    <property type="match status" value="1"/>
</dbReference>
<dbReference type="PANTHER" id="PTHR10916">
    <property type="entry name" value="60S RIBOSOMAL PROTEIN L35/50S RIBOSOMAL PROTEIN L29"/>
    <property type="match status" value="1"/>
</dbReference>
<dbReference type="PANTHER" id="PTHR10916:SF0">
    <property type="entry name" value="LARGE RIBOSOMAL SUBUNIT PROTEIN UL29C"/>
    <property type="match status" value="1"/>
</dbReference>
<dbReference type="Pfam" id="PF00831">
    <property type="entry name" value="Ribosomal_L29"/>
    <property type="match status" value="1"/>
</dbReference>
<dbReference type="SUPFAM" id="SSF46561">
    <property type="entry name" value="Ribosomal protein L29 (L29p)"/>
    <property type="match status" value="1"/>
</dbReference>
<proteinExistence type="inferred from homology"/>
<feature type="chain" id="PRO_1000121752" description="Large ribosomal subunit protein uL29">
    <location>
        <begin position="1"/>
        <end position="64"/>
    </location>
</feature>
<gene>
    <name evidence="1" type="primary">rpmC</name>
    <name type="ordered locus">COPRO5265_1005</name>
</gene>